<protein>
    <recommendedName>
        <fullName>Thioredoxin H-type</fullName>
        <shortName>Trx-H</shortName>
    </recommendedName>
</protein>
<sequence>MAATAELIPAGEVIACHTVEDWNNKLKAAKESNKLIVIDFTAVWCPPCRFIAPIFVELAKKHLDVVFFKVDVDELATVAKEFDVQAMPTFVYMKGEEKLDKVVGAAKEEIEAKLLKHSQVAAA</sequence>
<gene>
    <name type="primary">PEC-2</name>
</gene>
<name>TRXH_BRACM</name>
<proteinExistence type="evidence at transcript level"/>
<evidence type="ECO:0000250" key="1"/>
<evidence type="ECO:0000255" key="2">
    <source>
        <dbReference type="PROSITE-ProRule" id="PRU00691"/>
    </source>
</evidence>
<evidence type="ECO:0000305" key="3"/>
<feature type="chain" id="PRO_0000120054" description="Thioredoxin H-type">
    <location>
        <begin position="1"/>
        <end position="123"/>
    </location>
</feature>
<feature type="domain" description="Thioredoxin" evidence="2">
    <location>
        <begin position="2"/>
        <end position="119"/>
    </location>
</feature>
<feature type="disulfide bond" description="Redox-active" evidence="2">
    <location>
        <begin position="45"/>
        <end position="48"/>
    </location>
</feature>
<reference key="1">
    <citation type="journal article" date="1998" name="FEBS Lett.">
        <title>Molecular cloning of a cDNA encoding a pollen extracellular protein as a potential source of a pollen allergen in Brassica rapa.</title>
        <authorList>
            <person name="Toriyama K."/>
            <person name="Hanaoka K."/>
            <person name="Okada T."/>
            <person name="Watanabe M."/>
        </authorList>
    </citation>
    <scope>NUCLEOTIDE SEQUENCE [MRNA]</scope>
    <source>
        <tissue>Anther</tissue>
    </source>
</reference>
<keyword id="KW-0963">Cytoplasm</keyword>
<keyword id="KW-1015">Disulfide bond</keyword>
<keyword id="KW-0249">Electron transport</keyword>
<keyword id="KW-0676">Redox-active center</keyword>
<keyword id="KW-1185">Reference proteome</keyword>
<keyword id="KW-0813">Transport</keyword>
<accession>O64432</accession>
<comment type="function">
    <text evidence="1">Participates in various redox reactions through the reversible oxidation of the active center dithiol to a disulfide. The H form is known to activate a number of cytosolic enzymes (By similarity).</text>
</comment>
<comment type="subcellular location">
    <subcellularLocation>
        <location evidence="1">Cytoplasm</location>
    </subcellularLocation>
</comment>
<comment type="similarity">
    <text evidence="3">Belongs to the thioredoxin family. Plant H-type subfamily.</text>
</comment>
<organism>
    <name type="scientific">Brassica campestris</name>
    <name type="common">Field mustard</name>
    <dbReference type="NCBI Taxonomy" id="3711"/>
    <lineage>
        <taxon>Eukaryota</taxon>
        <taxon>Viridiplantae</taxon>
        <taxon>Streptophyta</taxon>
        <taxon>Embryophyta</taxon>
        <taxon>Tracheophyta</taxon>
        <taxon>Spermatophyta</taxon>
        <taxon>Magnoliopsida</taxon>
        <taxon>eudicotyledons</taxon>
        <taxon>Gunneridae</taxon>
        <taxon>Pentapetalae</taxon>
        <taxon>rosids</taxon>
        <taxon>malvids</taxon>
        <taxon>Brassicales</taxon>
        <taxon>Brassicaceae</taxon>
        <taxon>Brassiceae</taxon>
        <taxon>Brassica</taxon>
    </lineage>
</organism>
<dbReference type="EMBL" id="AB010434">
    <property type="protein sequence ID" value="BAA25681.1"/>
    <property type="molecule type" value="mRNA"/>
</dbReference>
<dbReference type="PIR" id="T14379">
    <property type="entry name" value="T14379"/>
</dbReference>
<dbReference type="RefSeq" id="NP_001288844.1">
    <property type="nucleotide sequence ID" value="NM_001301915.1"/>
</dbReference>
<dbReference type="SMR" id="O64432"/>
<dbReference type="EnsemblPlants" id="A09p21730.2_BraZ1">
    <property type="protein sequence ID" value="A09p21730.2_BraZ1.CDS"/>
    <property type="gene ID" value="A09g21730.2_BraZ1"/>
</dbReference>
<dbReference type="EnsemblPlants" id="Bra027469.1">
    <property type="protein sequence ID" value="Bra027469.1-P"/>
    <property type="gene ID" value="Bra027469"/>
</dbReference>
<dbReference type="GeneID" id="103839264"/>
<dbReference type="Gramene" id="A09p21730.2_BraZ1">
    <property type="protein sequence ID" value="A09p21730.2_BraZ1.CDS"/>
    <property type="gene ID" value="A09g21730.2_BraZ1"/>
</dbReference>
<dbReference type="Gramene" id="Bra027469.1">
    <property type="protein sequence ID" value="Bra027469.1-P"/>
    <property type="gene ID" value="Bra027469"/>
</dbReference>
<dbReference type="KEGG" id="brp:103839264"/>
<dbReference type="OMA" id="HIHYVTD"/>
<dbReference type="OrthoDB" id="10263751at2759"/>
<dbReference type="Proteomes" id="UP000011750">
    <property type="component" value="Chromosome A09"/>
</dbReference>
<dbReference type="GO" id="GO:0005737">
    <property type="term" value="C:cytoplasm"/>
    <property type="evidence" value="ECO:0007669"/>
    <property type="project" value="UniProtKB-SubCell"/>
</dbReference>
<dbReference type="CDD" id="cd02947">
    <property type="entry name" value="TRX_family"/>
    <property type="match status" value="1"/>
</dbReference>
<dbReference type="FunFam" id="3.40.30.10:FF:000245">
    <property type="entry name" value="Thioredoxin"/>
    <property type="match status" value="1"/>
</dbReference>
<dbReference type="Gene3D" id="3.40.30.10">
    <property type="entry name" value="Glutaredoxin"/>
    <property type="match status" value="1"/>
</dbReference>
<dbReference type="InterPro" id="IPR036249">
    <property type="entry name" value="Thioredoxin-like_sf"/>
</dbReference>
<dbReference type="InterPro" id="IPR017937">
    <property type="entry name" value="Thioredoxin_CS"/>
</dbReference>
<dbReference type="InterPro" id="IPR013766">
    <property type="entry name" value="Thioredoxin_domain"/>
</dbReference>
<dbReference type="InterPro" id="IPR050620">
    <property type="entry name" value="Thioredoxin_H-type-like"/>
</dbReference>
<dbReference type="PANTHER" id="PTHR10438">
    <property type="entry name" value="THIOREDOXIN"/>
    <property type="match status" value="1"/>
</dbReference>
<dbReference type="PANTHER" id="PTHR10438:SF410">
    <property type="entry name" value="THIOREDOXIN H3"/>
    <property type="match status" value="1"/>
</dbReference>
<dbReference type="Pfam" id="PF00085">
    <property type="entry name" value="Thioredoxin"/>
    <property type="match status" value="1"/>
</dbReference>
<dbReference type="PRINTS" id="PR00421">
    <property type="entry name" value="THIOREDOXIN"/>
</dbReference>
<dbReference type="SUPFAM" id="SSF52833">
    <property type="entry name" value="Thioredoxin-like"/>
    <property type="match status" value="1"/>
</dbReference>
<dbReference type="PROSITE" id="PS00194">
    <property type="entry name" value="THIOREDOXIN_1"/>
    <property type="match status" value="1"/>
</dbReference>
<dbReference type="PROSITE" id="PS51352">
    <property type="entry name" value="THIOREDOXIN_2"/>
    <property type="match status" value="1"/>
</dbReference>